<name>GCSP_ECOLI</name>
<protein>
    <recommendedName>
        <fullName evidence="1">Glycine dehydrogenase (decarboxylating)</fullName>
        <ecNumber evidence="1">1.4.4.2</ecNumber>
    </recommendedName>
    <alternativeName>
        <fullName evidence="1">Glycine cleavage system P-protein</fullName>
    </alternativeName>
    <alternativeName>
        <fullName evidence="1">Glycine decarboxylase</fullName>
    </alternativeName>
    <alternativeName>
        <fullName evidence="1">Glycine dehydrogenase (aminomethyl-transferring)</fullName>
    </alternativeName>
</protein>
<reference key="1">
    <citation type="journal article" date="1994" name="Gene">
        <title>Characterization of the Escherichia coli gcv operon.</title>
        <authorList>
            <person name="Stauffer L.T."/>
            <person name="Fogarty S.J."/>
            <person name="Stauffer G.V."/>
        </authorList>
    </citation>
    <scope>NUCLEOTIDE SEQUENCE [GENOMIC DNA]</scope>
    <scope>PARTIAL PROTEIN SEQUENCE</scope>
    <source>
        <strain>K12</strain>
    </source>
</reference>
<reference key="2">
    <citation type="journal article" date="1993" name="Eur. J. Biochem.">
        <title>Cloning and nucleotide sequence of the gcv operon encoding the Escherichia coli glycine-cleavage system.</title>
        <authorList>
            <person name="Okamura-Ikeda K."/>
            <person name="Ohmura Y."/>
            <person name="Fujiwara K."/>
            <person name="Motokawa Y."/>
        </authorList>
    </citation>
    <scope>NUCLEOTIDE SEQUENCE [GENOMIC DNA]</scope>
    <scope>PROTEIN SEQUENCE OF 2-11</scope>
    <scope>FUNCTION</scope>
    <scope>SUBUNIT</scope>
    <source>
        <strain>K12 / W3110 / ATCC 27325 / DSM 5911</strain>
    </source>
</reference>
<reference key="3">
    <citation type="journal article" date="1997" name="Science">
        <title>The complete genome sequence of Escherichia coli K-12.</title>
        <authorList>
            <person name="Blattner F.R."/>
            <person name="Plunkett G. III"/>
            <person name="Bloch C.A."/>
            <person name="Perna N.T."/>
            <person name="Burland V."/>
            <person name="Riley M."/>
            <person name="Collado-Vides J."/>
            <person name="Glasner J.D."/>
            <person name="Rode C.K."/>
            <person name="Mayhew G.F."/>
            <person name="Gregor J."/>
            <person name="Davis N.W."/>
            <person name="Kirkpatrick H.A."/>
            <person name="Goeden M.A."/>
            <person name="Rose D.J."/>
            <person name="Mau B."/>
            <person name="Shao Y."/>
        </authorList>
    </citation>
    <scope>NUCLEOTIDE SEQUENCE [LARGE SCALE GENOMIC DNA]</scope>
    <source>
        <strain>K12 / MG1655 / ATCC 47076</strain>
    </source>
</reference>
<reference key="4">
    <citation type="journal article" date="2006" name="Mol. Syst. Biol.">
        <title>Highly accurate genome sequences of Escherichia coli K-12 strains MG1655 and W3110.</title>
        <authorList>
            <person name="Hayashi K."/>
            <person name="Morooka N."/>
            <person name="Yamamoto Y."/>
            <person name="Fujita K."/>
            <person name="Isono K."/>
            <person name="Choi S."/>
            <person name="Ohtsubo E."/>
            <person name="Baba T."/>
            <person name="Wanner B.L."/>
            <person name="Mori H."/>
            <person name="Horiuchi T."/>
        </authorList>
    </citation>
    <scope>NUCLEOTIDE SEQUENCE [LARGE SCALE GENOMIC DNA]</scope>
    <source>
        <strain>K12 / W3110 / ATCC 27325 / DSM 5911</strain>
    </source>
</reference>
<gene>
    <name evidence="3" type="primary">gcvP</name>
    <name type="ordered locus">b2903</name>
    <name type="ordered locus">JW2871</name>
</gene>
<keyword id="KW-0903">Direct protein sequencing</keyword>
<keyword id="KW-0560">Oxidoreductase</keyword>
<keyword id="KW-0663">Pyridoxal phosphate</keyword>
<keyword id="KW-1185">Reference proteome</keyword>
<organism>
    <name type="scientific">Escherichia coli (strain K12)</name>
    <dbReference type="NCBI Taxonomy" id="83333"/>
    <lineage>
        <taxon>Bacteria</taxon>
        <taxon>Pseudomonadati</taxon>
        <taxon>Pseudomonadota</taxon>
        <taxon>Gammaproteobacteria</taxon>
        <taxon>Enterobacterales</taxon>
        <taxon>Enterobacteriaceae</taxon>
        <taxon>Escherichia</taxon>
    </lineage>
</organism>
<dbReference type="EC" id="1.4.4.2" evidence="1"/>
<dbReference type="EMBL" id="L20872">
    <property type="protein sequence ID" value="AAA23867.1"/>
    <property type="molecule type" value="Genomic_DNA"/>
</dbReference>
<dbReference type="EMBL" id="X73958">
    <property type="protein sequence ID" value="CAA52146.1"/>
    <property type="molecule type" value="Genomic_DNA"/>
</dbReference>
<dbReference type="EMBL" id="U28377">
    <property type="protein sequence ID" value="AAA69071.1"/>
    <property type="molecule type" value="Genomic_DNA"/>
</dbReference>
<dbReference type="EMBL" id="U00096">
    <property type="protein sequence ID" value="AAC75941.1"/>
    <property type="molecule type" value="Genomic_DNA"/>
</dbReference>
<dbReference type="EMBL" id="AP009048">
    <property type="protein sequence ID" value="BAE76968.1"/>
    <property type="molecule type" value="Genomic_DNA"/>
</dbReference>
<dbReference type="PIR" id="S36834">
    <property type="entry name" value="S36834"/>
</dbReference>
<dbReference type="RefSeq" id="NP_417379.1">
    <property type="nucleotide sequence ID" value="NC_000913.3"/>
</dbReference>
<dbReference type="RefSeq" id="WP_000195062.1">
    <property type="nucleotide sequence ID" value="NZ_LN832404.1"/>
</dbReference>
<dbReference type="SMR" id="P33195"/>
<dbReference type="BioGRID" id="4259708">
    <property type="interactions" value="64"/>
</dbReference>
<dbReference type="BioGRID" id="851716">
    <property type="interactions" value="1"/>
</dbReference>
<dbReference type="ComplexPortal" id="CPX-3949">
    <property type="entry name" value="Glycine cleavage system complex"/>
</dbReference>
<dbReference type="DIP" id="DIP-9753N"/>
<dbReference type="FunCoup" id="P33195">
    <property type="interactions" value="765"/>
</dbReference>
<dbReference type="IntAct" id="P33195">
    <property type="interactions" value="14"/>
</dbReference>
<dbReference type="STRING" id="511145.b2903"/>
<dbReference type="jPOST" id="P33195"/>
<dbReference type="PaxDb" id="511145-b2903"/>
<dbReference type="EnsemblBacteria" id="AAC75941">
    <property type="protein sequence ID" value="AAC75941"/>
    <property type="gene ID" value="b2903"/>
</dbReference>
<dbReference type="GeneID" id="947394"/>
<dbReference type="KEGG" id="ecj:JW2871"/>
<dbReference type="KEGG" id="eco:b2903"/>
<dbReference type="KEGG" id="ecoc:C3026_15915"/>
<dbReference type="PATRIC" id="fig|1411691.4.peg.3829"/>
<dbReference type="EchoBASE" id="EB1758"/>
<dbReference type="eggNOG" id="COG0403">
    <property type="taxonomic scope" value="Bacteria"/>
</dbReference>
<dbReference type="eggNOG" id="COG1003">
    <property type="taxonomic scope" value="Bacteria"/>
</dbReference>
<dbReference type="HOGENOM" id="CLU_004620_1_1_6"/>
<dbReference type="InParanoid" id="P33195"/>
<dbReference type="OMA" id="RNLICTC"/>
<dbReference type="OrthoDB" id="9801272at2"/>
<dbReference type="PhylomeDB" id="P33195"/>
<dbReference type="BioCyc" id="EcoCyc:GCVP-MONOMER"/>
<dbReference type="BioCyc" id="MetaCyc:GCVP-MONOMER"/>
<dbReference type="BRENDA" id="1.4.1.27">
    <property type="organism ID" value="2026"/>
</dbReference>
<dbReference type="PRO" id="PR:P33195"/>
<dbReference type="Proteomes" id="UP000000625">
    <property type="component" value="Chromosome"/>
</dbReference>
<dbReference type="GO" id="GO:0005829">
    <property type="term" value="C:cytosol"/>
    <property type="evidence" value="ECO:0000314"/>
    <property type="project" value="EcoCyc"/>
</dbReference>
<dbReference type="GO" id="GO:0005960">
    <property type="term" value="C:glycine cleavage complex"/>
    <property type="evidence" value="ECO:0000318"/>
    <property type="project" value="GO_Central"/>
</dbReference>
<dbReference type="GO" id="GO:0016594">
    <property type="term" value="F:glycine binding"/>
    <property type="evidence" value="ECO:0000318"/>
    <property type="project" value="GO_Central"/>
</dbReference>
<dbReference type="GO" id="GO:0004375">
    <property type="term" value="F:glycine dehydrogenase (decarboxylating) activity"/>
    <property type="evidence" value="ECO:0000314"/>
    <property type="project" value="EcoCyc"/>
</dbReference>
<dbReference type="GO" id="GO:0042802">
    <property type="term" value="F:identical protein binding"/>
    <property type="evidence" value="ECO:0000353"/>
    <property type="project" value="IntAct"/>
</dbReference>
<dbReference type="GO" id="GO:0030170">
    <property type="term" value="F:pyridoxal phosphate binding"/>
    <property type="evidence" value="ECO:0000318"/>
    <property type="project" value="GO_Central"/>
</dbReference>
<dbReference type="GO" id="GO:0019464">
    <property type="term" value="P:glycine decarboxylation via glycine cleavage system"/>
    <property type="evidence" value="ECO:0000318"/>
    <property type="project" value="GO_Central"/>
</dbReference>
<dbReference type="GO" id="GO:0006730">
    <property type="term" value="P:one-carbon metabolic process"/>
    <property type="evidence" value="ECO:0000303"/>
    <property type="project" value="ComplexPortal"/>
</dbReference>
<dbReference type="CDD" id="cd00613">
    <property type="entry name" value="GDC-P"/>
    <property type="match status" value="2"/>
</dbReference>
<dbReference type="FunFam" id="3.40.640.10:FF:000005">
    <property type="entry name" value="Glycine dehydrogenase (decarboxylating), mitochondrial"/>
    <property type="match status" value="1"/>
</dbReference>
<dbReference type="FunFam" id="3.90.1150.10:FF:000007">
    <property type="entry name" value="Glycine dehydrogenase (decarboxylating), mitochondrial"/>
    <property type="match status" value="1"/>
</dbReference>
<dbReference type="FunFam" id="3.40.640.10:FF:000007">
    <property type="entry name" value="glycine dehydrogenase (Decarboxylating), mitochondrial"/>
    <property type="match status" value="1"/>
</dbReference>
<dbReference type="Gene3D" id="3.90.1150.10">
    <property type="entry name" value="Aspartate Aminotransferase, domain 1"/>
    <property type="match status" value="1"/>
</dbReference>
<dbReference type="Gene3D" id="3.40.640.10">
    <property type="entry name" value="Type I PLP-dependent aspartate aminotransferase-like (Major domain)"/>
    <property type="match status" value="2"/>
</dbReference>
<dbReference type="HAMAP" id="MF_00711">
    <property type="entry name" value="GcvP"/>
    <property type="match status" value="1"/>
</dbReference>
<dbReference type="InterPro" id="IPR003437">
    <property type="entry name" value="GcvP"/>
</dbReference>
<dbReference type="InterPro" id="IPR049316">
    <property type="entry name" value="GDC-P_C"/>
</dbReference>
<dbReference type="InterPro" id="IPR049315">
    <property type="entry name" value="GDC-P_N"/>
</dbReference>
<dbReference type="InterPro" id="IPR020581">
    <property type="entry name" value="GDC_P"/>
</dbReference>
<dbReference type="InterPro" id="IPR015424">
    <property type="entry name" value="PyrdxlP-dep_Trfase"/>
</dbReference>
<dbReference type="InterPro" id="IPR015421">
    <property type="entry name" value="PyrdxlP-dep_Trfase_major"/>
</dbReference>
<dbReference type="InterPro" id="IPR015422">
    <property type="entry name" value="PyrdxlP-dep_Trfase_small"/>
</dbReference>
<dbReference type="NCBIfam" id="TIGR00461">
    <property type="entry name" value="gcvP"/>
    <property type="match status" value="1"/>
</dbReference>
<dbReference type="NCBIfam" id="NF003346">
    <property type="entry name" value="PRK04366.1"/>
    <property type="match status" value="1"/>
</dbReference>
<dbReference type="PANTHER" id="PTHR11773:SF13">
    <property type="entry name" value="GLYCINE DEHYDROGENASE (DECARBOXYLATING)"/>
    <property type="match status" value="1"/>
</dbReference>
<dbReference type="PANTHER" id="PTHR11773">
    <property type="entry name" value="GLYCINE DEHYDROGENASE, DECARBOXYLATING"/>
    <property type="match status" value="1"/>
</dbReference>
<dbReference type="Pfam" id="PF21478">
    <property type="entry name" value="GcvP2_C"/>
    <property type="match status" value="1"/>
</dbReference>
<dbReference type="Pfam" id="PF02347">
    <property type="entry name" value="GDC-P"/>
    <property type="match status" value="2"/>
</dbReference>
<dbReference type="SUPFAM" id="SSF53383">
    <property type="entry name" value="PLP-dependent transferases"/>
    <property type="match status" value="2"/>
</dbReference>
<feature type="initiator methionine" description="Removed" evidence="2">
    <location>
        <position position="1"/>
    </location>
</feature>
<feature type="chain" id="PRO_0000166913" description="Glycine dehydrogenase (decarboxylating)">
    <location>
        <begin position="2"/>
        <end position="957"/>
    </location>
</feature>
<feature type="modified residue" description="N6-(pyridoxal phosphate)lysine" evidence="1">
    <location>
        <position position="708"/>
    </location>
</feature>
<evidence type="ECO:0000255" key="1">
    <source>
        <dbReference type="HAMAP-Rule" id="MF_00711"/>
    </source>
</evidence>
<evidence type="ECO:0000269" key="2">
    <source>
    </source>
</evidence>
<evidence type="ECO:0000303" key="3">
    <source>
    </source>
</evidence>
<evidence type="ECO:0000305" key="4"/>
<comment type="function">
    <text evidence="1 2">The glycine cleavage system catalyzes the degradation of glycine. The P protein binds the alpha-amino group of glycine through its pyridoxal phosphate cofactor; CO(2) is released and the remaining methylamine moiety is then transferred to the lipoamide cofactor of the H protein.</text>
</comment>
<comment type="catalytic activity">
    <reaction evidence="1">
        <text>N(6)-[(R)-lipoyl]-L-lysyl-[glycine-cleavage complex H protein] + glycine + H(+) = N(6)-[(R)-S(8)-aminomethyldihydrolipoyl]-L-lysyl-[glycine-cleavage complex H protein] + CO2</text>
        <dbReference type="Rhea" id="RHEA:24304"/>
        <dbReference type="Rhea" id="RHEA-COMP:10494"/>
        <dbReference type="Rhea" id="RHEA-COMP:10495"/>
        <dbReference type="ChEBI" id="CHEBI:15378"/>
        <dbReference type="ChEBI" id="CHEBI:16526"/>
        <dbReference type="ChEBI" id="CHEBI:57305"/>
        <dbReference type="ChEBI" id="CHEBI:83099"/>
        <dbReference type="ChEBI" id="CHEBI:83143"/>
        <dbReference type="EC" id="1.4.4.2"/>
    </reaction>
</comment>
<comment type="cofactor">
    <cofactor evidence="1">
        <name>pyridoxal 5'-phosphate</name>
        <dbReference type="ChEBI" id="CHEBI:597326"/>
    </cofactor>
</comment>
<comment type="subunit">
    <text evidence="1 2">The glycine cleavage system is composed of four proteins: P, T, L and H.</text>
</comment>
<comment type="interaction">
    <interactant intactId="EBI-551489">
        <id>P33195</id>
    </interactant>
    <interactant intactId="EBI-551489">
        <id>P33195</id>
        <label>gcvP</label>
    </interactant>
    <organismsDiffer>false</organismsDiffer>
    <experiments>2</experiments>
</comment>
<comment type="induction">
    <text>By glycine.</text>
</comment>
<comment type="similarity">
    <text evidence="1 4">Belongs to the GcvP family.</text>
</comment>
<accession>P33195</accession>
<accession>Q2M9T8</accession>
<sequence>MTQTLSQLENSGAFIERHIGPDAAQQQEMLNAVGAQSLNALTGQIVPKDIQLATPPQVGAPATEYAALAELKAIASRNKRFTSYIGMGYTAVQLPPVILRNMLENPGWYTAYTPYQPEVSQGRLEALLNFQQVTLDLTGLDMASASLLDEATAAAEAMAMAKRVSKLKNANRFFVASDVHPQTLDVVRTRAETFGFEVIVDDAQKVLDHQDVFGVLLQQVGTTGEIHDYTALISELKSRKIVVSVAADIMALVLLTAPGKQGADIVFGSAQRFGVPMGYGGPHAAFFAAKDEYKRSMPGRIIGVSKDAAGNTALRMAMQTREQHIRREKANSNICTSQVLLANIASLYAVYHGPVGLKRIANRIHRLTDILAAGLQQKGLKLRHAHYFDTLCVEVADKAGVLTRAEAAEINLRSDILNAVGITLDETTTRENVMQLFNVLLGDNHGLDIDTLDKDVAHDSRSIQPAMLRDDEILTHPVFNRYHSETEMMRYMHSLERKDLALNQAMIPLGSCTMKLNAAAEMIPITWPEFAELHPFCPPEQAEGYQQMIAQLADWLVKLTGYDAVCMQPNSGAQGEYAGLLAIRHYHESRNEGHRDICLIPASAHGTNPASAHMAGMQVVVVACDKNGNIDLTDLRAKAEQAGDNLSCIMVTYPSTHGVYEETIREVCEVVHQFGGQVYLDGANMNAQVGITSPGFIGADVSHLNLHKTFCIPHGGGGPGMGPIGVKAHLAPFVPGHSVVQIEGMLTRQGAVSAAPFGSASILPISWMYIRMMGAEGLKKASQVAILNANYIASRLQDAFPVLYTGRDGRVAHECILDIRPLKEETGISELDIAKRLIDYGFHAPTMSFPVAGTLMVEPTESESKVELDRFIDAMLAIRAEIDQVKAGVWPLEDNPLVNAPHIQSELVAEWAHPYSREVAVFPAGVADKYWPTVKRLDDVYGDRNLFCSCVPISEYQ</sequence>
<proteinExistence type="evidence at protein level"/>